<feature type="initiator methionine" description="Removed" evidence="1">
    <location>
        <position position="1"/>
    </location>
</feature>
<feature type="chain" id="PRO_0000158360" description="Histone H4">
    <location>
        <begin position="2"/>
        <end position="103"/>
    </location>
</feature>
<feature type="DNA-binding region">
    <location>
        <begin position="17"/>
        <end position="21"/>
    </location>
</feature>
<feature type="region of interest" description="Disordered" evidence="2">
    <location>
        <begin position="1"/>
        <end position="20"/>
    </location>
</feature>
<feature type="compositionally biased region" description="Gly residues" evidence="2">
    <location>
        <begin position="1"/>
        <end position="14"/>
    </location>
</feature>
<feature type="modified residue" description="N-acetylserine" evidence="1">
    <location>
        <position position="2"/>
    </location>
</feature>
<feature type="modified residue" description="N6-acetyllysine" evidence="1">
    <location>
        <position position="17"/>
    </location>
</feature>
<feature type="modified residue" description="N6-methyllysine" evidence="1">
    <location>
        <position position="21"/>
    </location>
</feature>
<accession>Q6V9I2</accession>
<reference key="1">
    <citation type="journal article" date="2003" name="Plant Mol. Biol.">
        <title>Fertilization induces strong accumulation of a histone deacetylase (HD2) and of other chromatin-remodeling proteins in restricted areas of the ovules.</title>
        <authorList>
            <person name="Lagace M."/>
            <person name="Chantha S.-C."/>
            <person name="Major G."/>
            <person name="Matton D.P."/>
        </authorList>
    </citation>
    <scope>NUCLEOTIDE SEQUENCE [MRNA]</scope>
</reference>
<sequence>MSGRGKGGKGLGKGGAKRHRKVLRDNIQGITKPAIRRLARRGGVKRISGLIYEETRGVLKIFLENVIRDSVTYTEHARRKTVTAMDVVYALKRQGRTLYGFGG</sequence>
<comment type="function">
    <text>Core component of nucleosome. Nucleosomes wrap and compact DNA into chromatin, limiting DNA accessibility to the cellular machineries which require DNA as a template. Histones thereby play a central role in transcription regulation, DNA repair, DNA replication and chromosomal stability. DNA accessibility is regulated via a complex set of post-translational modifications of histones, also called histone code, and nucleosome remodeling.</text>
</comment>
<comment type="subunit">
    <text>The nucleosome is a histone octamer containing two molecules each of H2A, H2B, H3 and H4 assembled in one H3-H4 heterotetramer and two H2A-H2B heterodimers. The octamer wraps approximately 147 bp of DNA.</text>
</comment>
<comment type="subcellular location">
    <subcellularLocation>
        <location evidence="1">Nucleus</location>
    </subcellularLocation>
    <subcellularLocation>
        <location evidence="1">Chromosome</location>
    </subcellularLocation>
</comment>
<comment type="similarity">
    <text evidence="3">Belongs to the histone H4 family.</text>
</comment>
<keyword id="KW-0007">Acetylation</keyword>
<keyword id="KW-0158">Chromosome</keyword>
<keyword id="KW-0238">DNA-binding</keyword>
<keyword id="KW-0488">Methylation</keyword>
<keyword id="KW-0544">Nucleosome core</keyword>
<keyword id="KW-0539">Nucleus</keyword>
<organism>
    <name type="scientific">Solanum chacoense</name>
    <name type="common">Chaco potato</name>
    <dbReference type="NCBI Taxonomy" id="4108"/>
    <lineage>
        <taxon>Eukaryota</taxon>
        <taxon>Viridiplantae</taxon>
        <taxon>Streptophyta</taxon>
        <taxon>Embryophyta</taxon>
        <taxon>Tracheophyta</taxon>
        <taxon>Spermatophyta</taxon>
        <taxon>Magnoliopsida</taxon>
        <taxon>eudicotyledons</taxon>
        <taxon>Gunneridae</taxon>
        <taxon>Pentapetalae</taxon>
        <taxon>asterids</taxon>
        <taxon>lamiids</taxon>
        <taxon>Solanales</taxon>
        <taxon>Solanaceae</taxon>
        <taxon>Solanoideae</taxon>
        <taxon>Solaneae</taxon>
        <taxon>Solanum</taxon>
    </lineage>
</organism>
<evidence type="ECO:0000250" key="1"/>
<evidence type="ECO:0000256" key="2">
    <source>
        <dbReference type="SAM" id="MobiDB-lite"/>
    </source>
</evidence>
<evidence type="ECO:0000305" key="3"/>
<proteinExistence type="inferred from homology"/>
<name>H4_SOLCH</name>
<dbReference type="EMBL" id="AY346459">
    <property type="protein sequence ID" value="AAQ24536.1"/>
    <property type="molecule type" value="mRNA"/>
</dbReference>
<dbReference type="SMR" id="Q6V9I2"/>
<dbReference type="GO" id="GO:0000786">
    <property type="term" value="C:nucleosome"/>
    <property type="evidence" value="ECO:0007669"/>
    <property type="project" value="UniProtKB-KW"/>
</dbReference>
<dbReference type="GO" id="GO:0005634">
    <property type="term" value="C:nucleus"/>
    <property type="evidence" value="ECO:0007669"/>
    <property type="project" value="UniProtKB-SubCell"/>
</dbReference>
<dbReference type="GO" id="GO:0003677">
    <property type="term" value="F:DNA binding"/>
    <property type="evidence" value="ECO:0007669"/>
    <property type="project" value="UniProtKB-KW"/>
</dbReference>
<dbReference type="GO" id="GO:0046982">
    <property type="term" value="F:protein heterodimerization activity"/>
    <property type="evidence" value="ECO:0007669"/>
    <property type="project" value="InterPro"/>
</dbReference>
<dbReference type="GO" id="GO:0030527">
    <property type="term" value="F:structural constituent of chromatin"/>
    <property type="evidence" value="ECO:0007669"/>
    <property type="project" value="InterPro"/>
</dbReference>
<dbReference type="CDD" id="cd22912">
    <property type="entry name" value="HFD_H4"/>
    <property type="match status" value="1"/>
</dbReference>
<dbReference type="FunFam" id="1.10.20.10:FF:000002">
    <property type="entry name" value="Histone H4"/>
    <property type="match status" value="1"/>
</dbReference>
<dbReference type="Gene3D" id="1.10.20.10">
    <property type="entry name" value="Histone, subunit A"/>
    <property type="match status" value="1"/>
</dbReference>
<dbReference type="InterPro" id="IPR035425">
    <property type="entry name" value="CENP-T/H4_C"/>
</dbReference>
<dbReference type="InterPro" id="IPR009072">
    <property type="entry name" value="Histone-fold"/>
</dbReference>
<dbReference type="InterPro" id="IPR001951">
    <property type="entry name" value="Histone_H4"/>
</dbReference>
<dbReference type="InterPro" id="IPR019809">
    <property type="entry name" value="Histone_H4_CS"/>
</dbReference>
<dbReference type="PANTHER" id="PTHR10484">
    <property type="entry name" value="HISTONE H4"/>
    <property type="match status" value="1"/>
</dbReference>
<dbReference type="Pfam" id="PF15511">
    <property type="entry name" value="CENP-T_C"/>
    <property type="match status" value="1"/>
</dbReference>
<dbReference type="PRINTS" id="PR00623">
    <property type="entry name" value="HISTONEH4"/>
</dbReference>
<dbReference type="SMART" id="SM00417">
    <property type="entry name" value="H4"/>
    <property type="match status" value="1"/>
</dbReference>
<dbReference type="SUPFAM" id="SSF47113">
    <property type="entry name" value="Histone-fold"/>
    <property type="match status" value="1"/>
</dbReference>
<dbReference type="PROSITE" id="PS00047">
    <property type="entry name" value="HISTONE_H4"/>
    <property type="match status" value="1"/>
</dbReference>
<protein>
    <recommendedName>
        <fullName>Histone H4</fullName>
    </recommendedName>
</protein>